<reference key="1">
    <citation type="journal article" date="2005" name="Nature">
        <title>The genome of the social amoeba Dictyostelium discoideum.</title>
        <authorList>
            <person name="Eichinger L."/>
            <person name="Pachebat J.A."/>
            <person name="Gloeckner G."/>
            <person name="Rajandream M.A."/>
            <person name="Sucgang R."/>
            <person name="Berriman M."/>
            <person name="Song J."/>
            <person name="Olsen R."/>
            <person name="Szafranski K."/>
            <person name="Xu Q."/>
            <person name="Tunggal B."/>
            <person name="Kummerfeld S."/>
            <person name="Madera M."/>
            <person name="Konfortov B.A."/>
            <person name="Rivero F."/>
            <person name="Bankier A.T."/>
            <person name="Lehmann R."/>
            <person name="Hamlin N."/>
            <person name="Davies R."/>
            <person name="Gaudet P."/>
            <person name="Fey P."/>
            <person name="Pilcher K."/>
            <person name="Chen G."/>
            <person name="Saunders D."/>
            <person name="Sodergren E.J."/>
            <person name="Davis P."/>
            <person name="Kerhornou A."/>
            <person name="Nie X."/>
            <person name="Hall N."/>
            <person name="Anjard C."/>
            <person name="Hemphill L."/>
            <person name="Bason N."/>
            <person name="Farbrother P."/>
            <person name="Desany B."/>
            <person name="Just E."/>
            <person name="Morio T."/>
            <person name="Rost R."/>
            <person name="Churcher C.M."/>
            <person name="Cooper J."/>
            <person name="Haydock S."/>
            <person name="van Driessche N."/>
            <person name="Cronin A."/>
            <person name="Goodhead I."/>
            <person name="Muzny D.M."/>
            <person name="Mourier T."/>
            <person name="Pain A."/>
            <person name="Lu M."/>
            <person name="Harper D."/>
            <person name="Lindsay R."/>
            <person name="Hauser H."/>
            <person name="James K.D."/>
            <person name="Quiles M."/>
            <person name="Madan Babu M."/>
            <person name="Saito T."/>
            <person name="Buchrieser C."/>
            <person name="Wardroper A."/>
            <person name="Felder M."/>
            <person name="Thangavelu M."/>
            <person name="Johnson D."/>
            <person name="Knights A."/>
            <person name="Loulseged H."/>
            <person name="Mungall K.L."/>
            <person name="Oliver K."/>
            <person name="Price C."/>
            <person name="Quail M.A."/>
            <person name="Urushihara H."/>
            <person name="Hernandez J."/>
            <person name="Rabbinowitsch E."/>
            <person name="Steffen D."/>
            <person name="Sanders M."/>
            <person name="Ma J."/>
            <person name="Kohara Y."/>
            <person name="Sharp S."/>
            <person name="Simmonds M.N."/>
            <person name="Spiegler S."/>
            <person name="Tivey A."/>
            <person name="Sugano S."/>
            <person name="White B."/>
            <person name="Walker D."/>
            <person name="Woodward J.R."/>
            <person name="Winckler T."/>
            <person name="Tanaka Y."/>
            <person name="Shaulsky G."/>
            <person name="Schleicher M."/>
            <person name="Weinstock G.M."/>
            <person name="Rosenthal A."/>
            <person name="Cox E.C."/>
            <person name="Chisholm R.L."/>
            <person name="Gibbs R.A."/>
            <person name="Loomis W.F."/>
            <person name="Platzer M."/>
            <person name="Kay R.R."/>
            <person name="Williams J.G."/>
            <person name="Dear P.H."/>
            <person name="Noegel A.A."/>
            <person name="Barrell B.G."/>
            <person name="Kuspa A."/>
        </authorList>
    </citation>
    <scope>NUCLEOTIDE SEQUENCE [LARGE SCALE GENOMIC DNA]</scope>
    <source>
        <strain>AX4</strain>
    </source>
</reference>
<accession>Q54IT3</accession>
<feature type="chain" id="PRO_0000328628" description="Probable flavin-containing monoamine oxidase A">
    <location>
        <begin position="1"/>
        <end position="456"/>
    </location>
</feature>
<feature type="modified residue" description="S-8alpha-FAD cysteine" evidence="1">
    <location>
        <position position="394"/>
    </location>
</feature>
<comment type="catalytic activity">
    <reaction>
        <text>a secondary aliphatic amine + O2 + H2O = a primary amine + an aldehyde + H2O2</text>
        <dbReference type="Rhea" id="RHEA:26414"/>
        <dbReference type="ChEBI" id="CHEBI:15377"/>
        <dbReference type="ChEBI" id="CHEBI:15379"/>
        <dbReference type="ChEBI" id="CHEBI:16240"/>
        <dbReference type="ChEBI" id="CHEBI:17478"/>
        <dbReference type="ChEBI" id="CHEBI:58855"/>
        <dbReference type="ChEBI" id="CHEBI:65296"/>
        <dbReference type="EC" id="1.4.3.4"/>
    </reaction>
</comment>
<comment type="cofactor">
    <cofactor evidence="1">
        <name>FAD</name>
        <dbReference type="ChEBI" id="CHEBI:57692"/>
    </cofactor>
</comment>
<comment type="similarity">
    <text evidence="2">Belongs to the flavin monoamine oxidase family.</text>
</comment>
<keyword id="KW-0274">FAD</keyword>
<keyword id="KW-0285">Flavoprotein</keyword>
<keyword id="KW-0560">Oxidoreductase</keyword>
<keyword id="KW-1185">Reference proteome</keyword>
<proteinExistence type="inferred from homology"/>
<name>AOFA_DICDI</name>
<evidence type="ECO:0000250" key="1"/>
<evidence type="ECO:0000305" key="2"/>
<protein>
    <recommendedName>
        <fullName>Probable flavin-containing monoamine oxidase A</fullName>
        <ecNumber>1.4.3.4</ecNumber>
    </recommendedName>
</protein>
<gene>
    <name type="primary">maoA</name>
    <name type="ORF">DDB_G0288541</name>
</gene>
<organism>
    <name type="scientific">Dictyostelium discoideum</name>
    <name type="common">Social amoeba</name>
    <dbReference type="NCBI Taxonomy" id="44689"/>
    <lineage>
        <taxon>Eukaryota</taxon>
        <taxon>Amoebozoa</taxon>
        <taxon>Evosea</taxon>
        <taxon>Eumycetozoa</taxon>
        <taxon>Dictyostelia</taxon>
        <taxon>Dictyosteliales</taxon>
        <taxon>Dictyosteliaceae</taxon>
        <taxon>Dictyostelium</taxon>
    </lineage>
</organism>
<sequence length="456" mass="51259">MSTLYDVVIVGGGLTGLNAAYQFKKAGLNVMVLKPKDRFGGRTESIKVEDYWFDLGGQWMGGTHKYLKELCDELGVKSFPQYDEGKHVLEINGKKVYYQGNISNLNKSYNLEGLFESISKIDELSAELNPDKPYAHSKSKEYDQLTVAQWVEKNVKGNDARSIIDWFCRVCVAAEPTEVSFLFFLHFIRTAGNYGLLADIHGGAQQDRLIGGSQQISEGLAKKIGEKHYTLNAPVRSIIQDANQCTIKTDNGSTYRSKYIVVAIPPTLAGRIHYSPSMPPRRDELTQRMPMGSVIKTITIYDEPFWRKEGYSAEAISDKGPIFICYDDSSHDDKKTAIVGFIAASAAKDWAEKSPEERKRAVLDCYARWWGPKALSPRIFLEKSWKEEEYSRGCYLGYTSPGTLYQCGEHLRAPVGRIHWAGTETASVWIGYMEGALESGFRVSKEIKDKLLNSKL</sequence>
<dbReference type="EC" id="1.4.3.4"/>
<dbReference type="EMBL" id="AAFI02000115">
    <property type="protein sequence ID" value="EAL63176.1"/>
    <property type="molecule type" value="Genomic_DNA"/>
</dbReference>
<dbReference type="RefSeq" id="XP_636677.1">
    <property type="nucleotide sequence ID" value="XM_631585.1"/>
</dbReference>
<dbReference type="SMR" id="Q54IT3"/>
<dbReference type="FunCoup" id="Q54IT3">
    <property type="interactions" value="24"/>
</dbReference>
<dbReference type="STRING" id="44689.Q54IT3"/>
<dbReference type="PaxDb" id="44689-DDB0231707"/>
<dbReference type="EnsemblProtists" id="EAL63176">
    <property type="protein sequence ID" value="EAL63176"/>
    <property type="gene ID" value="DDB_G0288541"/>
</dbReference>
<dbReference type="GeneID" id="8626677"/>
<dbReference type="KEGG" id="ddi:DDB_G0288541"/>
<dbReference type="dictyBase" id="DDB_G0288541">
    <property type="gene designation" value="maoA"/>
</dbReference>
<dbReference type="VEuPathDB" id="AmoebaDB:DDB_G0288541"/>
<dbReference type="eggNOG" id="KOG0029">
    <property type="taxonomic scope" value="Eukaryota"/>
</dbReference>
<dbReference type="HOGENOM" id="CLU_004498_0_4_1"/>
<dbReference type="InParanoid" id="Q54IT3"/>
<dbReference type="OMA" id="PIHWAGT"/>
<dbReference type="PhylomeDB" id="Q54IT3"/>
<dbReference type="Reactome" id="R-DDI-141333">
    <property type="pathway name" value="Biogenic amines are oxidatively deaminated to aldehydes by MAOA and MAOB"/>
</dbReference>
<dbReference type="Reactome" id="R-DDI-181430">
    <property type="pathway name" value="Norepinephrine Neurotransmitter Release Cycle"/>
</dbReference>
<dbReference type="Reactome" id="R-DDI-379397">
    <property type="pathway name" value="Enzymatic degradation of dopamine by COMT"/>
</dbReference>
<dbReference type="Reactome" id="R-DDI-379398">
    <property type="pathway name" value="Enzymatic degradation of Dopamine by monoamine oxidase"/>
</dbReference>
<dbReference type="Reactome" id="R-DDI-379401">
    <property type="pathway name" value="Dopamine clearance from the synaptic cleft"/>
</dbReference>
<dbReference type="Reactome" id="R-DDI-380612">
    <property type="pathway name" value="Metabolism of serotonin"/>
</dbReference>
<dbReference type="PRO" id="PR:Q54IT3"/>
<dbReference type="Proteomes" id="UP000002195">
    <property type="component" value="Chromosome 5"/>
</dbReference>
<dbReference type="GO" id="GO:0097621">
    <property type="term" value="F:monoamine oxidase activity"/>
    <property type="evidence" value="ECO:0007669"/>
    <property type="project" value="UniProtKB-EC"/>
</dbReference>
<dbReference type="Gene3D" id="3.90.660.10">
    <property type="match status" value="1"/>
</dbReference>
<dbReference type="Gene3D" id="3.50.50.60">
    <property type="entry name" value="FAD/NAD(P)-binding domain"/>
    <property type="match status" value="1"/>
</dbReference>
<dbReference type="Gene3D" id="1.10.405.10">
    <property type="entry name" value="Guanine Nucleotide Dissociation Inhibitor, domain 1"/>
    <property type="match status" value="1"/>
</dbReference>
<dbReference type="InterPro" id="IPR002937">
    <property type="entry name" value="Amino_oxidase"/>
</dbReference>
<dbReference type="InterPro" id="IPR036188">
    <property type="entry name" value="FAD/NAD-bd_sf"/>
</dbReference>
<dbReference type="InterPro" id="IPR001613">
    <property type="entry name" value="Flavin_amine_oxidase"/>
</dbReference>
<dbReference type="InterPro" id="IPR050703">
    <property type="entry name" value="Flavin_MAO"/>
</dbReference>
<dbReference type="PANTHER" id="PTHR43563">
    <property type="entry name" value="AMINE OXIDASE"/>
    <property type="match status" value="1"/>
</dbReference>
<dbReference type="PANTHER" id="PTHR43563:SF12">
    <property type="entry name" value="FLAVIN-CONTAINING MONOAMINE OXIDASE A-RELATED"/>
    <property type="match status" value="1"/>
</dbReference>
<dbReference type="Pfam" id="PF01593">
    <property type="entry name" value="Amino_oxidase"/>
    <property type="match status" value="1"/>
</dbReference>
<dbReference type="PRINTS" id="PR00757">
    <property type="entry name" value="AMINEOXDASEF"/>
</dbReference>
<dbReference type="SUPFAM" id="SSF54373">
    <property type="entry name" value="FAD-linked reductases, C-terminal domain"/>
    <property type="match status" value="1"/>
</dbReference>
<dbReference type="SUPFAM" id="SSF51905">
    <property type="entry name" value="FAD/NAD(P)-binding domain"/>
    <property type="match status" value="1"/>
</dbReference>